<organism>
    <name type="scientific">Arabidopsis thaliana</name>
    <name type="common">Mouse-ear cress</name>
    <dbReference type="NCBI Taxonomy" id="3702"/>
    <lineage>
        <taxon>Eukaryota</taxon>
        <taxon>Viridiplantae</taxon>
        <taxon>Streptophyta</taxon>
        <taxon>Embryophyta</taxon>
        <taxon>Tracheophyta</taxon>
        <taxon>Spermatophyta</taxon>
        <taxon>Magnoliopsida</taxon>
        <taxon>eudicotyledons</taxon>
        <taxon>Gunneridae</taxon>
        <taxon>Pentapetalae</taxon>
        <taxon>rosids</taxon>
        <taxon>malvids</taxon>
        <taxon>Brassicales</taxon>
        <taxon>Brassicaceae</taxon>
        <taxon>Camelineae</taxon>
        <taxon>Arabidopsis</taxon>
    </lineage>
</organism>
<name>PP100_ARATH</name>
<sequence>MQRSISLTAKRLFVHWNLQGIGNPPTVPSFFNLCGSGCWERSFASASGDYREILRNRLSDIIKVDDAVDLFGDMVKSRPFPSIVEFNKLLSAVAKMNKFELVISLGEQMQTLGISHDLYTYSIFINCFCRRSQLSLALAVLAKMMKLGYEPDIVTLSSLLNGYCHSKRISDAVALVDQMVEMGYKPDTFTFTTLIHGLFLHNKASEAVALVDQMVQRGCQPDLVTYGTVVNGLCKRGDIDLALNLLNKMEAARIKANVVIFNTIIDSLCKYRHVEVAVDLFTEMETKGIRPNVVTYNSLINCLCNYGRWSDASRLLSNMLEKKINPNVVTFNALIDAFFKEGKLVEAEKLHEEMIQRSIDPDTITYNLLINGFCMHNRLDEAKQMFKFMVSKDCLPNIQTYNTLINGFCKCKRVEDGVELFREMSQRGLVGNTVTYTTIIQGFFQAGDCDSAQMVFKQMVSNRVPTDIMTYSILLHGLCSYGKLDTALVIFKYLQKSEMELNIFIYNTMIEGMCKAGKVGEAWDLFCSLSIKPDVVTYNTMISGLCSKRLLQEADDLFRKMKEDGTLPNSGTYNTLIRANLRDCDRAASAELIKEMRSSGFVGDASTISLVTNMLHDGRLDKSFLNMLS</sequence>
<proteinExistence type="evidence at transcript level"/>
<keyword id="KW-1185">Reference proteome</keyword>
<keyword id="KW-0677">Repeat</keyword>
<feature type="chain" id="PRO_0000342841" description="Pentatricopeptide repeat-containing protein At1g63150">
    <location>
        <begin position="1"/>
        <end position="629"/>
    </location>
</feature>
<feature type="repeat" description="PPR 1">
    <location>
        <begin position="46"/>
        <end position="81"/>
    </location>
</feature>
<feature type="repeat" description="PPR 2">
    <location>
        <begin position="82"/>
        <end position="116"/>
    </location>
</feature>
<feature type="repeat" description="PPR 3">
    <location>
        <begin position="117"/>
        <end position="151"/>
    </location>
</feature>
<feature type="repeat" description="PPR 4">
    <location>
        <begin position="152"/>
        <end position="186"/>
    </location>
</feature>
<feature type="repeat" description="PPR 5">
    <location>
        <begin position="187"/>
        <end position="221"/>
    </location>
</feature>
<feature type="repeat" description="PPR 6">
    <location>
        <begin position="222"/>
        <end position="256"/>
    </location>
</feature>
<feature type="repeat" description="PPR 7">
    <location>
        <begin position="257"/>
        <end position="291"/>
    </location>
</feature>
<feature type="repeat" description="PPR 8">
    <location>
        <begin position="292"/>
        <end position="326"/>
    </location>
</feature>
<feature type="repeat" description="PPR 9">
    <location>
        <begin position="327"/>
        <end position="361"/>
    </location>
</feature>
<feature type="repeat" description="PPR 10">
    <location>
        <begin position="362"/>
        <end position="396"/>
    </location>
</feature>
<feature type="repeat" description="PPR 11">
    <location>
        <begin position="397"/>
        <end position="431"/>
    </location>
</feature>
<feature type="repeat" description="PPR 12">
    <location>
        <begin position="432"/>
        <end position="466"/>
    </location>
</feature>
<feature type="repeat" description="PPR 13">
    <location>
        <begin position="467"/>
        <end position="501"/>
    </location>
</feature>
<feature type="repeat" description="PPR 14">
    <location>
        <begin position="502"/>
        <end position="532"/>
    </location>
</feature>
<feature type="repeat" description="PPR 15">
    <location>
        <begin position="534"/>
        <end position="568"/>
    </location>
</feature>
<feature type="repeat" description="PPR 16">
    <location>
        <begin position="569"/>
        <end position="603"/>
    </location>
</feature>
<evidence type="ECO:0000305" key="1"/>
<accession>Q9CAM8</accession>
<protein>
    <recommendedName>
        <fullName>Pentatricopeptide repeat-containing protein At1g63150</fullName>
    </recommendedName>
</protein>
<comment type="similarity">
    <text evidence="1">Belongs to the PPR family. P subfamily.</text>
</comment>
<comment type="online information" name="Pentatricopeptide repeat proteins">
    <link uri="https://ppr.plantenergy.uwa.edu.au"/>
</comment>
<dbReference type="EMBL" id="AC010795">
    <property type="protein sequence ID" value="AAG51611.1"/>
    <property type="molecule type" value="Genomic_DNA"/>
</dbReference>
<dbReference type="EMBL" id="CP002684">
    <property type="protein sequence ID" value="AEE34062.1"/>
    <property type="molecule type" value="Genomic_DNA"/>
</dbReference>
<dbReference type="EMBL" id="CP002684">
    <property type="protein sequence ID" value="ANM61191.1"/>
    <property type="molecule type" value="Genomic_DNA"/>
</dbReference>
<dbReference type="EMBL" id="AY056252">
    <property type="protein sequence ID" value="AAL07101.1"/>
    <property type="molecule type" value="mRNA"/>
</dbReference>
<dbReference type="EMBL" id="BT000997">
    <property type="protein sequence ID" value="AAN41397.1"/>
    <property type="molecule type" value="mRNA"/>
</dbReference>
<dbReference type="PIR" id="A96657">
    <property type="entry name" value="A96657"/>
</dbReference>
<dbReference type="RefSeq" id="NP_001323422.1">
    <property type="nucleotide sequence ID" value="NM_001334070.1"/>
</dbReference>
<dbReference type="RefSeq" id="NP_564809.1">
    <property type="nucleotide sequence ID" value="NM_104993.2"/>
</dbReference>
<dbReference type="SMR" id="Q9CAM8"/>
<dbReference type="FunCoup" id="Q9CAM8">
    <property type="interactions" value="145"/>
</dbReference>
<dbReference type="STRING" id="3702.Q9CAM8"/>
<dbReference type="PaxDb" id="3702-AT1G63150.1"/>
<dbReference type="ProteomicsDB" id="250485"/>
<dbReference type="EnsemblPlants" id="AT1G63150.1">
    <property type="protein sequence ID" value="AT1G63150.1"/>
    <property type="gene ID" value="AT1G63150"/>
</dbReference>
<dbReference type="EnsemblPlants" id="AT1G63150.2">
    <property type="protein sequence ID" value="AT1G63150.2"/>
    <property type="gene ID" value="AT1G63150"/>
</dbReference>
<dbReference type="GeneID" id="842619"/>
<dbReference type="Gramene" id="AT1G63150.1">
    <property type="protein sequence ID" value="AT1G63150.1"/>
    <property type="gene ID" value="AT1G63150"/>
</dbReference>
<dbReference type="Gramene" id="AT1G63150.2">
    <property type="protein sequence ID" value="AT1G63150.2"/>
    <property type="gene ID" value="AT1G63150"/>
</dbReference>
<dbReference type="KEGG" id="ath:AT1G63150"/>
<dbReference type="Araport" id="AT1G63150"/>
<dbReference type="TAIR" id="AT1G63150"/>
<dbReference type="eggNOG" id="KOG4197">
    <property type="taxonomic scope" value="Eukaryota"/>
</dbReference>
<dbReference type="HOGENOM" id="CLU_002706_49_12_1"/>
<dbReference type="InParanoid" id="Q9CAM8"/>
<dbReference type="OMA" id="WILWEMS"/>
<dbReference type="PhylomeDB" id="Q9CAM8"/>
<dbReference type="PRO" id="PR:Q9CAM8"/>
<dbReference type="Proteomes" id="UP000006548">
    <property type="component" value="Chromosome 1"/>
</dbReference>
<dbReference type="ExpressionAtlas" id="Q9CAM8">
    <property type="expression patterns" value="baseline and differential"/>
</dbReference>
<dbReference type="FunFam" id="1.25.40.10:FF:003300">
    <property type="entry name" value="Pentatricopeptide repeat-containing protein At1g62590"/>
    <property type="match status" value="1"/>
</dbReference>
<dbReference type="FunFam" id="1.25.40.10:FF:000558">
    <property type="entry name" value="Pentatricopeptide repeat-containing protein At5g39710"/>
    <property type="match status" value="1"/>
</dbReference>
<dbReference type="Gene3D" id="1.25.40.10">
    <property type="entry name" value="Tetratricopeptide repeat domain"/>
    <property type="match status" value="7"/>
</dbReference>
<dbReference type="InterPro" id="IPR002885">
    <property type="entry name" value="Pentatricopeptide_rpt"/>
</dbReference>
<dbReference type="InterPro" id="IPR011990">
    <property type="entry name" value="TPR-like_helical_dom_sf"/>
</dbReference>
<dbReference type="NCBIfam" id="TIGR00756">
    <property type="entry name" value="PPR"/>
    <property type="match status" value="13"/>
</dbReference>
<dbReference type="PANTHER" id="PTHR47938:SF46">
    <property type="entry name" value="PENTACOTRIPEPTIDE-REPEAT REGION OF PRORP DOMAIN-CONTAINING PROTEIN"/>
    <property type="match status" value="1"/>
</dbReference>
<dbReference type="PANTHER" id="PTHR47938">
    <property type="entry name" value="RESPIRATORY COMPLEX I CHAPERONE (CIA84), PUTATIVE (AFU_ORTHOLOGUE AFUA_2G06020)-RELATED"/>
    <property type="match status" value="1"/>
</dbReference>
<dbReference type="Pfam" id="PF12854">
    <property type="entry name" value="PPR_1"/>
    <property type="match status" value="3"/>
</dbReference>
<dbReference type="Pfam" id="PF13041">
    <property type="entry name" value="PPR_2"/>
    <property type="match status" value="6"/>
</dbReference>
<dbReference type="SUPFAM" id="SSF48452">
    <property type="entry name" value="TPR-like"/>
    <property type="match status" value="1"/>
</dbReference>
<dbReference type="PROSITE" id="PS51375">
    <property type="entry name" value="PPR"/>
    <property type="match status" value="15"/>
</dbReference>
<reference key="1">
    <citation type="journal article" date="2000" name="Nature">
        <title>Sequence and analysis of chromosome 1 of the plant Arabidopsis thaliana.</title>
        <authorList>
            <person name="Theologis A."/>
            <person name="Ecker J.R."/>
            <person name="Palm C.J."/>
            <person name="Federspiel N.A."/>
            <person name="Kaul S."/>
            <person name="White O."/>
            <person name="Alonso J."/>
            <person name="Altafi H."/>
            <person name="Araujo R."/>
            <person name="Bowman C.L."/>
            <person name="Brooks S.Y."/>
            <person name="Buehler E."/>
            <person name="Chan A."/>
            <person name="Chao Q."/>
            <person name="Chen H."/>
            <person name="Cheuk R.F."/>
            <person name="Chin C.W."/>
            <person name="Chung M.K."/>
            <person name="Conn L."/>
            <person name="Conway A.B."/>
            <person name="Conway A.R."/>
            <person name="Creasy T.H."/>
            <person name="Dewar K."/>
            <person name="Dunn P."/>
            <person name="Etgu P."/>
            <person name="Feldblyum T.V."/>
            <person name="Feng J.-D."/>
            <person name="Fong B."/>
            <person name="Fujii C.Y."/>
            <person name="Gill J.E."/>
            <person name="Goldsmith A.D."/>
            <person name="Haas B."/>
            <person name="Hansen N.F."/>
            <person name="Hughes B."/>
            <person name="Huizar L."/>
            <person name="Hunter J.L."/>
            <person name="Jenkins J."/>
            <person name="Johnson-Hopson C."/>
            <person name="Khan S."/>
            <person name="Khaykin E."/>
            <person name="Kim C.J."/>
            <person name="Koo H.L."/>
            <person name="Kremenetskaia I."/>
            <person name="Kurtz D.B."/>
            <person name="Kwan A."/>
            <person name="Lam B."/>
            <person name="Langin-Hooper S."/>
            <person name="Lee A."/>
            <person name="Lee J.M."/>
            <person name="Lenz C.A."/>
            <person name="Li J.H."/>
            <person name="Li Y.-P."/>
            <person name="Lin X."/>
            <person name="Liu S.X."/>
            <person name="Liu Z.A."/>
            <person name="Luros J.S."/>
            <person name="Maiti R."/>
            <person name="Marziali A."/>
            <person name="Militscher J."/>
            <person name="Miranda M."/>
            <person name="Nguyen M."/>
            <person name="Nierman W.C."/>
            <person name="Osborne B.I."/>
            <person name="Pai G."/>
            <person name="Peterson J."/>
            <person name="Pham P.K."/>
            <person name="Rizzo M."/>
            <person name="Rooney T."/>
            <person name="Rowley D."/>
            <person name="Sakano H."/>
            <person name="Salzberg S.L."/>
            <person name="Schwartz J.R."/>
            <person name="Shinn P."/>
            <person name="Southwick A.M."/>
            <person name="Sun H."/>
            <person name="Tallon L.J."/>
            <person name="Tambunga G."/>
            <person name="Toriumi M.J."/>
            <person name="Town C.D."/>
            <person name="Utterback T."/>
            <person name="Van Aken S."/>
            <person name="Vaysberg M."/>
            <person name="Vysotskaia V.S."/>
            <person name="Walker M."/>
            <person name="Wu D."/>
            <person name="Yu G."/>
            <person name="Fraser C.M."/>
            <person name="Venter J.C."/>
            <person name="Davis R.W."/>
        </authorList>
    </citation>
    <scope>NUCLEOTIDE SEQUENCE [LARGE SCALE GENOMIC DNA]</scope>
    <source>
        <strain>cv. Columbia</strain>
    </source>
</reference>
<reference key="2">
    <citation type="journal article" date="2017" name="Plant J.">
        <title>Araport11: a complete reannotation of the Arabidopsis thaliana reference genome.</title>
        <authorList>
            <person name="Cheng C.Y."/>
            <person name="Krishnakumar V."/>
            <person name="Chan A.P."/>
            <person name="Thibaud-Nissen F."/>
            <person name="Schobel S."/>
            <person name="Town C.D."/>
        </authorList>
    </citation>
    <scope>GENOME REANNOTATION</scope>
    <source>
        <strain>cv. Columbia</strain>
    </source>
</reference>
<reference key="3">
    <citation type="journal article" date="2003" name="Science">
        <title>Empirical analysis of transcriptional activity in the Arabidopsis genome.</title>
        <authorList>
            <person name="Yamada K."/>
            <person name="Lim J."/>
            <person name="Dale J.M."/>
            <person name="Chen H."/>
            <person name="Shinn P."/>
            <person name="Palm C.J."/>
            <person name="Southwick A.M."/>
            <person name="Wu H.C."/>
            <person name="Kim C.J."/>
            <person name="Nguyen M."/>
            <person name="Pham P.K."/>
            <person name="Cheuk R.F."/>
            <person name="Karlin-Newmann G."/>
            <person name="Liu S.X."/>
            <person name="Lam B."/>
            <person name="Sakano H."/>
            <person name="Wu T."/>
            <person name="Yu G."/>
            <person name="Miranda M."/>
            <person name="Quach H.L."/>
            <person name="Tripp M."/>
            <person name="Chang C.H."/>
            <person name="Lee J.M."/>
            <person name="Toriumi M.J."/>
            <person name="Chan M.M."/>
            <person name="Tang C.C."/>
            <person name="Onodera C.S."/>
            <person name="Deng J.M."/>
            <person name="Akiyama K."/>
            <person name="Ansari Y."/>
            <person name="Arakawa T."/>
            <person name="Banh J."/>
            <person name="Banno F."/>
            <person name="Bowser L."/>
            <person name="Brooks S.Y."/>
            <person name="Carninci P."/>
            <person name="Chao Q."/>
            <person name="Choy N."/>
            <person name="Enju A."/>
            <person name="Goldsmith A.D."/>
            <person name="Gurjal M."/>
            <person name="Hansen N.F."/>
            <person name="Hayashizaki Y."/>
            <person name="Johnson-Hopson C."/>
            <person name="Hsuan V.W."/>
            <person name="Iida K."/>
            <person name="Karnes M."/>
            <person name="Khan S."/>
            <person name="Koesema E."/>
            <person name="Ishida J."/>
            <person name="Jiang P.X."/>
            <person name="Jones T."/>
            <person name="Kawai J."/>
            <person name="Kamiya A."/>
            <person name="Meyers C."/>
            <person name="Nakajima M."/>
            <person name="Narusaka M."/>
            <person name="Seki M."/>
            <person name="Sakurai T."/>
            <person name="Satou M."/>
            <person name="Tamse R."/>
            <person name="Vaysberg M."/>
            <person name="Wallender E.K."/>
            <person name="Wong C."/>
            <person name="Yamamura Y."/>
            <person name="Yuan S."/>
            <person name="Shinozaki K."/>
            <person name="Davis R.W."/>
            <person name="Theologis A."/>
            <person name="Ecker J.R."/>
        </authorList>
    </citation>
    <scope>NUCLEOTIDE SEQUENCE [LARGE SCALE MRNA]</scope>
    <source>
        <strain>cv. Columbia</strain>
    </source>
</reference>
<reference key="4">
    <citation type="journal article" date="2004" name="Plant Cell">
        <title>Genome-wide analysis of Arabidopsis pentatricopeptide repeat proteins reveals their essential role in organelle biogenesis.</title>
        <authorList>
            <person name="Lurin C."/>
            <person name="Andres C."/>
            <person name="Aubourg S."/>
            <person name="Bellaoui M."/>
            <person name="Bitton F."/>
            <person name="Bruyere C."/>
            <person name="Caboche M."/>
            <person name="Debast C."/>
            <person name="Gualberto J."/>
            <person name="Hoffmann B."/>
            <person name="Lecharny A."/>
            <person name="Le Ret M."/>
            <person name="Martin-Magniette M.-L."/>
            <person name="Mireau H."/>
            <person name="Peeters N."/>
            <person name="Renou J.-P."/>
            <person name="Szurek B."/>
            <person name="Taconnat L."/>
            <person name="Small I."/>
        </authorList>
    </citation>
    <scope>GENE FAMILY</scope>
</reference>
<gene>
    <name type="ordered locus">At1g63150</name>
    <name type="ORF">F16M19.13</name>
</gene>